<reference key="1">
    <citation type="journal article" date="1995" name="Microbiology">
        <title>Lactococcus lactis glyceraldehyde-3-phosphate dehydrogenase gene, gap: further evidence for strongly biased codon usage in glycolytic pathway genes.</title>
        <authorList>
            <person name="Cancilla M.R."/>
            <person name="Hillier A.J."/>
            <person name="Davidson B.E."/>
        </authorList>
    </citation>
    <scope>NUCLEOTIDE SEQUENCE [GENOMIC DNA]</scope>
    <source>
        <strain>LM0230</strain>
    </source>
</reference>
<reference key="2">
    <citation type="journal article" date="2001" name="Genome Res.">
        <title>The complete genome sequence of the lactic acid bacterium Lactococcus lactis ssp. lactis IL1403.</title>
        <authorList>
            <person name="Bolotin A."/>
            <person name="Wincker P."/>
            <person name="Mauger S."/>
            <person name="Jaillon O."/>
            <person name="Malarme K."/>
            <person name="Weissenbach J."/>
            <person name="Ehrlich S.D."/>
            <person name="Sorokin A."/>
        </authorList>
    </citation>
    <scope>NUCLEOTIDE SEQUENCE [LARGE SCALE GENOMIC DNA]</scope>
    <source>
        <strain>IL1403</strain>
    </source>
</reference>
<organism>
    <name type="scientific">Lactococcus lactis subsp. lactis (strain IL1403)</name>
    <name type="common">Streptococcus lactis</name>
    <dbReference type="NCBI Taxonomy" id="272623"/>
    <lineage>
        <taxon>Bacteria</taxon>
        <taxon>Bacillati</taxon>
        <taxon>Bacillota</taxon>
        <taxon>Bacilli</taxon>
        <taxon>Lactobacillales</taxon>
        <taxon>Streptococcaceae</taxon>
        <taxon>Lactococcus</taxon>
    </lineage>
</organism>
<proteinExistence type="predicted"/>
<sequence>MKLSSGWEQSVYVLLILARLPENRTMSSIALANRLKVSPSYLKKIIKSLVDEGLLRSTPGKNGGFSLNKELHDISFYDVFLAIEGRGRIFQSQGLLQNFIGSESGKAKRCAITSALDEIENTLVRTLSNVSLAQVADETQYNYNLGYLDEWIDEMD</sequence>
<protein>
    <recommendedName>
        <fullName>Putative HTH-type transcriptional regulator YffB</fullName>
    </recommendedName>
</protein>
<dbReference type="EMBL" id="L36907">
    <property type="protein sequence ID" value="AAC41452.1"/>
    <property type="molecule type" value="Genomic_DNA"/>
</dbReference>
<dbReference type="EMBL" id="AE005176">
    <property type="protein sequence ID" value="AAK04656.1"/>
    <property type="molecule type" value="Genomic_DNA"/>
</dbReference>
<dbReference type="PIR" id="F86694">
    <property type="entry name" value="F86694"/>
</dbReference>
<dbReference type="RefSeq" id="NP_266714.1">
    <property type="nucleotide sequence ID" value="NC_002662.1"/>
</dbReference>
<dbReference type="RefSeq" id="WP_010905440.1">
    <property type="nucleotide sequence ID" value="NC_002662.1"/>
</dbReference>
<dbReference type="SMR" id="Q48660"/>
<dbReference type="PaxDb" id="272623-L153086"/>
<dbReference type="EnsemblBacteria" id="AAK04656">
    <property type="protein sequence ID" value="AAK04656"/>
    <property type="gene ID" value="L153086"/>
</dbReference>
<dbReference type="KEGG" id="lla:L153086"/>
<dbReference type="PATRIC" id="fig|272623.7.peg.596"/>
<dbReference type="eggNOG" id="COG1959">
    <property type="taxonomic scope" value="Bacteria"/>
</dbReference>
<dbReference type="HOGENOM" id="CLU_107144_1_0_9"/>
<dbReference type="OrthoDB" id="9808360at2"/>
<dbReference type="Proteomes" id="UP000002196">
    <property type="component" value="Chromosome"/>
</dbReference>
<dbReference type="GO" id="GO:0005829">
    <property type="term" value="C:cytosol"/>
    <property type="evidence" value="ECO:0007669"/>
    <property type="project" value="TreeGrafter"/>
</dbReference>
<dbReference type="GO" id="GO:0003677">
    <property type="term" value="F:DNA binding"/>
    <property type="evidence" value="ECO:0007669"/>
    <property type="project" value="UniProtKB-KW"/>
</dbReference>
<dbReference type="GO" id="GO:0003700">
    <property type="term" value="F:DNA-binding transcription factor activity"/>
    <property type="evidence" value="ECO:0007669"/>
    <property type="project" value="TreeGrafter"/>
</dbReference>
<dbReference type="Gene3D" id="1.10.10.10">
    <property type="entry name" value="Winged helix-like DNA-binding domain superfamily/Winged helix DNA-binding domain"/>
    <property type="match status" value="1"/>
</dbReference>
<dbReference type="InterPro" id="IPR030489">
    <property type="entry name" value="TR_Rrf2-type_CS"/>
</dbReference>
<dbReference type="InterPro" id="IPR000944">
    <property type="entry name" value="Tscrpt_reg_Rrf2"/>
</dbReference>
<dbReference type="InterPro" id="IPR036388">
    <property type="entry name" value="WH-like_DNA-bd_sf"/>
</dbReference>
<dbReference type="InterPro" id="IPR036390">
    <property type="entry name" value="WH_DNA-bd_sf"/>
</dbReference>
<dbReference type="NCBIfam" id="TIGR00738">
    <property type="entry name" value="rrf2_super"/>
    <property type="match status" value="1"/>
</dbReference>
<dbReference type="PANTHER" id="PTHR33221:SF15">
    <property type="entry name" value="HTH-TYPE TRANSCRIPTIONAL REGULATOR YWGB-RELATED"/>
    <property type="match status" value="1"/>
</dbReference>
<dbReference type="PANTHER" id="PTHR33221">
    <property type="entry name" value="WINGED HELIX-TURN-HELIX TRANSCRIPTIONAL REGULATOR, RRF2 FAMILY"/>
    <property type="match status" value="1"/>
</dbReference>
<dbReference type="Pfam" id="PF02082">
    <property type="entry name" value="Rrf2"/>
    <property type="match status" value="1"/>
</dbReference>
<dbReference type="SUPFAM" id="SSF46785">
    <property type="entry name" value="Winged helix' DNA-binding domain"/>
    <property type="match status" value="1"/>
</dbReference>
<dbReference type="PROSITE" id="PS01332">
    <property type="entry name" value="HTH_RRF2_1"/>
    <property type="match status" value="1"/>
</dbReference>
<dbReference type="PROSITE" id="PS51197">
    <property type="entry name" value="HTH_RRF2_2"/>
    <property type="match status" value="1"/>
</dbReference>
<feature type="chain" id="PRO_0000109570" description="Putative HTH-type transcriptional regulator YffB">
    <location>
        <begin position="1"/>
        <end position="156"/>
    </location>
</feature>
<feature type="domain" description="HTH rrf2-type" evidence="1">
    <location>
        <begin position="2"/>
        <end position="137"/>
    </location>
</feature>
<feature type="sequence conflict" description="In Ref. 1; AAC41452." evidence="2" ref="1">
    <original>P</original>
    <variation>T</variation>
    <location>
        <position position="59"/>
    </location>
</feature>
<feature type="sequence conflict" description="In Ref. 1; AAC41452." evidence="2" ref="1">
    <original>E</original>
    <variation>D</variation>
    <location>
        <position position="70"/>
    </location>
</feature>
<feature type="sequence conflict" description="In Ref. 1; AAC41452." evidence="2" ref="1">
    <original>S</original>
    <variation>A</variation>
    <location>
        <position position="102"/>
    </location>
</feature>
<feature type="sequence conflict" description="In Ref. 1; AAC41452." evidence="2" ref="1">
    <original>KR</original>
    <variation>QH</variation>
    <location>
        <begin position="108"/>
        <end position="109"/>
    </location>
</feature>
<feature type="sequence conflict" description="In Ref. 1; AAC41452." evidence="2" ref="1">
    <original>S</original>
    <variation>T</variation>
    <location>
        <position position="114"/>
    </location>
</feature>
<evidence type="ECO:0000255" key="1">
    <source>
        <dbReference type="PROSITE-ProRule" id="PRU00540"/>
    </source>
</evidence>
<evidence type="ECO:0000305" key="2"/>
<keyword id="KW-0238">DNA-binding</keyword>
<keyword id="KW-1185">Reference proteome</keyword>
<name>YFFB_LACLA</name>
<gene>
    <name type="primary">yffB</name>
    <name type="ordered locus">LL0558</name>
    <name type="ORF">L153086</name>
</gene>
<accession>Q48660</accession>